<feature type="chain" id="PRO_0000197632" description="Opsin Rh4">
    <location>
        <begin position="1"/>
        <end position="383"/>
    </location>
</feature>
<feature type="topological domain" description="Extracellular">
    <location>
        <begin position="1"/>
        <end position="57"/>
    </location>
</feature>
<feature type="transmembrane region" description="Helical; Name=1" evidence="2">
    <location>
        <begin position="58"/>
        <end position="82"/>
    </location>
</feature>
<feature type="topological domain" description="Cytoplasmic">
    <location>
        <begin position="83"/>
        <end position="94"/>
    </location>
</feature>
<feature type="transmembrane region" description="Helical; Name=2" evidence="2">
    <location>
        <begin position="95"/>
        <end position="117"/>
    </location>
</feature>
<feature type="topological domain" description="Extracellular">
    <location>
        <begin position="118"/>
        <end position="133"/>
    </location>
</feature>
<feature type="transmembrane region" description="Helical; Name=3" evidence="2">
    <location>
        <begin position="134"/>
        <end position="153"/>
    </location>
</feature>
<feature type="topological domain" description="Cytoplasmic">
    <location>
        <begin position="154"/>
        <end position="171"/>
    </location>
</feature>
<feature type="transmembrane region" description="Helical; Name=4" evidence="2">
    <location>
        <begin position="172"/>
        <end position="196"/>
    </location>
</feature>
<feature type="topological domain" description="Extracellular">
    <location>
        <begin position="197"/>
        <end position="220"/>
    </location>
</feature>
<feature type="transmembrane region" description="Helical; Name=5" evidence="2">
    <location>
        <begin position="221"/>
        <end position="248"/>
    </location>
</feature>
<feature type="topological domain" description="Cytoplasmic">
    <location>
        <begin position="249"/>
        <end position="284"/>
    </location>
</feature>
<feature type="transmembrane region" description="Helical; Name=6" evidence="2">
    <location>
        <begin position="285"/>
        <end position="308"/>
    </location>
</feature>
<feature type="topological domain" description="Extracellular">
    <location>
        <begin position="309"/>
        <end position="316"/>
    </location>
</feature>
<feature type="transmembrane region" description="Helical; Name=7" evidence="2">
    <location>
        <begin position="317"/>
        <end position="341"/>
    </location>
</feature>
<feature type="topological domain" description="Cytoplasmic">
    <location>
        <begin position="342"/>
        <end position="383"/>
    </location>
</feature>
<feature type="region of interest" description="Disordered" evidence="4">
    <location>
        <begin position="361"/>
        <end position="383"/>
    </location>
</feature>
<feature type="compositionally biased region" description="Low complexity" evidence="4">
    <location>
        <begin position="364"/>
        <end position="383"/>
    </location>
</feature>
<feature type="modified residue" description="N6-(retinylidene)lysine" evidence="1">
    <location>
        <position position="328"/>
    </location>
</feature>
<feature type="glycosylation site" description="N-linked (GlcNAc...) asparagine" evidence="5">
    <location>
        <position position="9"/>
    </location>
</feature>
<feature type="disulfide bond" evidence="3">
    <location>
        <begin position="130"/>
        <end position="207"/>
    </location>
</feature>
<accession>P17646</accession>
<reference key="1">
    <citation type="journal article" date="1991" name="Proc. Natl. Acad. Sci. U.S.A.">
        <title>Evolution of gene position: chromosomal arrangement and sequence comparison of the Drosophila melanogaster and Drosophila virilis sina and Rh4 genes.</title>
        <authorList>
            <person name="Neufeld T.P."/>
            <person name="Carthew R.W."/>
            <person name="Rubin G.M."/>
        </authorList>
    </citation>
    <scope>NUCLEOTIDE SEQUENCE [GENOMIC DNA]</scope>
</reference>
<reference key="2">
    <citation type="journal article" date="1990" name="Genes Dev.">
        <title>Analysis of cis-acting requirements of the Rh3 and Rh4 genes reveals a bipartite organization to rhodopsin promoters in Drosophila melanogaster.</title>
        <authorList>
            <person name="Fortini M.E."/>
            <person name="Rubin G.M."/>
        </authorList>
    </citation>
    <scope>NUCLEOTIDE SEQUENCE [GENOMIC DNA] OF 1-29</scope>
</reference>
<comment type="function">
    <text>Visual pigments are the light-absorbing molecules that mediate vision. They consist of an apoprotein, opsin, covalently linked to cis-retinal.</text>
</comment>
<comment type="subcellular location">
    <subcellularLocation>
        <location>Membrane</location>
        <topology>Multi-pass membrane protein</topology>
    </subcellularLocation>
</comment>
<comment type="PTM">
    <text>Phosphorylated on some or all of the serine and threonine residues present in the C-terminal region.</text>
</comment>
<comment type="miscellaneous">
    <text>Each Drosophila eye is composed of 800 facets or ommatidia. Each ommatidium contains 8 photoreceptor cells (R1-R8), the R1 to R6 cells are outer cells, while R7 and R8 are inner cells.</text>
</comment>
<comment type="miscellaneous">
    <text>Opsin Rh4 is sensitive to UV light.</text>
</comment>
<comment type="similarity">
    <text evidence="3">Belongs to the G-protein coupled receptor 1 family. Opsin subfamily.</text>
</comment>
<sequence>MDIAGSLCNASEGPVLRPEARVSGNGDLQFLGWNVPPDQIQHIPEHWLTQLEPPASMHYMLGVFYIFLFCASTVGNGMVIWIFSTSKALRTPSNMFVLNLAVFDFIMCLKAPIFIYNSFHRGFALGNTGCQIFAAIGSYSGIGAGMTNAAIGYDRLNVITKPMNRNMTFTKAIIMNVIIWLYCTPWVVLPLTQFWDRFVPEGYLTSCTFDYLTDNFDTRLFVGTIFFFSFVCPTLMIIYYYSQIVGHVFSHEKALREQAKKMNVESLRSNVDKSKDTAEIRIAKAAITICFLFFVSWTPYGVMSLIGAFGDKSLLTPGATMIPACTCKLVACIDPFVYAISHPRYRMELQKRCPWLAIDEKAPESSSAASTTTTQEQQQTTAA</sequence>
<protein>
    <recommendedName>
        <fullName>Opsin Rh4</fullName>
    </recommendedName>
    <alternativeName>
        <fullName>Inner R7 photoreceptor cells opsin</fullName>
    </alternativeName>
</protein>
<proteinExistence type="inferred from homology"/>
<name>OPS4_DROVI</name>
<evidence type="ECO:0000250" key="1"/>
<evidence type="ECO:0000255" key="2"/>
<evidence type="ECO:0000255" key="3">
    <source>
        <dbReference type="PROSITE-ProRule" id="PRU00521"/>
    </source>
</evidence>
<evidence type="ECO:0000256" key="4">
    <source>
        <dbReference type="SAM" id="MobiDB-lite"/>
    </source>
</evidence>
<evidence type="ECO:0000305" key="5"/>
<organism>
    <name type="scientific">Drosophila virilis</name>
    <name type="common">Fruit fly</name>
    <dbReference type="NCBI Taxonomy" id="7244"/>
    <lineage>
        <taxon>Eukaryota</taxon>
        <taxon>Metazoa</taxon>
        <taxon>Ecdysozoa</taxon>
        <taxon>Arthropoda</taxon>
        <taxon>Hexapoda</taxon>
        <taxon>Insecta</taxon>
        <taxon>Pterygota</taxon>
        <taxon>Neoptera</taxon>
        <taxon>Endopterygota</taxon>
        <taxon>Diptera</taxon>
        <taxon>Brachycera</taxon>
        <taxon>Muscomorpha</taxon>
        <taxon>Ephydroidea</taxon>
        <taxon>Drosophilidae</taxon>
        <taxon>Drosophila</taxon>
    </lineage>
</organism>
<dbReference type="EMBL" id="M77281">
    <property type="protein sequence ID" value="AAA28855.1"/>
    <property type="molecule type" value="Genomic_DNA"/>
</dbReference>
<dbReference type="EMBL" id="X51351">
    <property type="protein sequence ID" value="CAA35743.1"/>
    <property type="molecule type" value="Genomic_DNA"/>
</dbReference>
<dbReference type="PIR" id="B41544">
    <property type="entry name" value="B41544"/>
</dbReference>
<dbReference type="SMR" id="P17646"/>
<dbReference type="GlyCosmos" id="P17646">
    <property type="glycosylation" value="1 site, No reported glycans"/>
</dbReference>
<dbReference type="eggNOG" id="KOG3656">
    <property type="taxonomic scope" value="Eukaryota"/>
</dbReference>
<dbReference type="OrthoDB" id="2105199at2759"/>
<dbReference type="ChiTaRS" id="Rh4">
    <property type="organism name" value="fly"/>
</dbReference>
<dbReference type="GO" id="GO:0016020">
    <property type="term" value="C:membrane"/>
    <property type="evidence" value="ECO:0007669"/>
    <property type="project" value="UniProtKB-SubCell"/>
</dbReference>
<dbReference type="GO" id="GO:0008020">
    <property type="term" value="F:G protein-coupled photoreceptor activity"/>
    <property type="evidence" value="ECO:0007669"/>
    <property type="project" value="UniProtKB-ARBA"/>
</dbReference>
<dbReference type="GO" id="GO:0007602">
    <property type="term" value="P:phototransduction"/>
    <property type="evidence" value="ECO:0007669"/>
    <property type="project" value="UniProtKB-KW"/>
</dbReference>
<dbReference type="GO" id="GO:0007601">
    <property type="term" value="P:visual perception"/>
    <property type="evidence" value="ECO:0007669"/>
    <property type="project" value="UniProtKB-KW"/>
</dbReference>
<dbReference type="CDD" id="cd15079">
    <property type="entry name" value="7tmA_photoreceptors_insect"/>
    <property type="match status" value="1"/>
</dbReference>
<dbReference type="FunFam" id="1.20.1070.10:FF:000044">
    <property type="entry name" value="Opsin, ultraviolet-sensitive"/>
    <property type="match status" value="1"/>
</dbReference>
<dbReference type="Gene3D" id="1.20.1070.10">
    <property type="entry name" value="Rhodopsin 7-helix transmembrane proteins"/>
    <property type="match status" value="1"/>
</dbReference>
<dbReference type="InterPro" id="IPR050125">
    <property type="entry name" value="GPCR_opsins"/>
</dbReference>
<dbReference type="InterPro" id="IPR000276">
    <property type="entry name" value="GPCR_Rhodpsn"/>
</dbReference>
<dbReference type="InterPro" id="IPR017452">
    <property type="entry name" value="GPCR_Rhodpsn_7TM"/>
</dbReference>
<dbReference type="InterPro" id="IPR001760">
    <property type="entry name" value="Opsin"/>
</dbReference>
<dbReference type="InterPro" id="IPR027430">
    <property type="entry name" value="Retinal_BS"/>
</dbReference>
<dbReference type="PANTHER" id="PTHR24240">
    <property type="entry name" value="OPSIN"/>
    <property type="match status" value="1"/>
</dbReference>
<dbReference type="Pfam" id="PF00001">
    <property type="entry name" value="7tm_1"/>
    <property type="match status" value="1"/>
</dbReference>
<dbReference type="PRINTS" id="PR00237">
    <property type="entry name" value="GPCRRHODOPSN"/>
</dbReference>
<dbReference type="PRINTS" id="PR00577">
    <property type="entry name" value="OPSINRH3RH4"/>
</dbReference>
<dbReference type="SMART" id="SM01381">
    <property type="entry name" value="7TM_GPCR_Srsx"/>
    <property type="match status" value="1"/>
</dbReference>
<dbReference type="SUPFAM" id="SSF81321">
    <property type="entry name" value="Family A G protein-coupled receptor-like"/>
    <property type="match status" value="1"/>
</dbReference>
<dbReference type="PROSITE" id="PS50262">
    <property type="entry name" value="G_PROTEIN_RECEP_F1_2"/>
    <property type="match status" value="1"/>
</dbReference>
<dbReference type="PROSITE" id="PS00238">
    <property type="entry name" value="OPSIN"/>
    <property type="match status" value="1"/>
</dbReference>
<keyword id="KW-0157">Chromophore</keyword>
<keyword id="KW-1015">Disulfide bond</keyword>
<keyword id="KW-0297">G-protein coupled receptor</keyword>
<keyword id="KW-0325">Glycoprotein</keyword>
<keyword id="KW-0472">Membrane</keyword>
<keyword id="KW-0597">Phosphoprotein</keyword>
<keyword id="KW-0600">Photoreceptor protein</keyword>
<keyword id="KW-0675">Receptor</keyword>
<keyword id="KW-0681">Retinal protein</keyword>
<keyword id="KW-0716">Sensory transduction</keyword>
<keyword id="KW-0807">Transducer</keyword>
<keyword id="KW-0812">Transmembrane</keyword>
<keyword id="KW-1133">Transmembrane helix</keyword>
<keyword id="KW-0844">Vision</keyword>
<gene>
    <name type="primary">Rh4</name>
</gene>